<feature type="chain" id="PRO_0000128434" description="Ribonuclease P protein component 1">
    <location>
        <begin position="1"/>
        <end position="99"/>
    </location>
</feature>
<protein>
    <recommendedName>
        <fullName evidence="1">Ribonuclease P protein component 1</fullName>
        <shortName evidence="1">RNase P component 1</shortName>
        <ecNumber evidence="1">3.1.26.5</ecNumber>
    </recommendedName>
    <alternativeName>
        <fullName evidence="1">Rpp29</fullName>
    </alternativeName>
</protein>
<evidence type="ECO:0000255" key="1">
    <source>
        <dbReference type="HAMAP-Rule" id="MF_00754"/>
    </source>
</evidence>
<sequence length="99" mass="11626">MKFSQNILRHELVGLNLEIVNSTDKRLISTKGRVINETRNMLVIEKNNGKEITVPKEISIFRFEFSDLDTPKKVDIDGRLLIGRPEDRLKRKIKQLYPY</sequence>
<keyword id="KW-0963">Cytoplasm</keyword>
<keyword id="KW-0255">Endonuclease</keyword>
<keyword id="KW-0378">Hydrolase</keyword>
<keyword id="KW-0540">Nuclease</keyword>
<keyword id="KW-0819">tRNA processing</keyword>
<gene>
    <name evidence="1" type="primary">rnp1</name>
</gene>
<dbReference type="EC" id="3.1.26.5" evidence="1"/>
<dbReference type="EMBL" id="X16720">
    <property type="protein sequence ID" value="CAA34688.1"/>
    <property type="molecule type" value="Genomic_DNA"/>
</dbReference>
<dbReference type="PIR" id="S05612">
    <property type="entry name" value="S05612"/>
</dbReference>
<dbReference type="SMR" id="P14022"/>
<dbReference type="GeneID" id="5326119"/>
<dbReference type="OMA" id="WHELIGL"/>
<dbReference type="GO" id="GO:0005737">
    <property type="term" value="C:cytoplasm"/>
    <property type="evidence" value="ECO:0007669"/>
    <property type="project" value="UniProtKB-SubCell"/>
</dbReference>
<dbReference type="GO" id="GO:0030677">
    <property type="term" value="C:ribonuclease P complex"/>
    <property type="evidence" value="ECO:0007669"/>
    <property type="project" value="UniProtKB-UniRule"/>
</dbReference>
<dbReference type="GO" id="GO:0004526">
    <property type="term" value="F:ribonuclease P activity"/>
    <property type="evidence" value="ECO:0007669"/>
    <property type="project" value="UniProtKB-UniRule"/>
</dbReference>
<dbReference type="GO" id="GO:0003723">
    <property type="term" value="F:RNA binding"/>
    <property type="evidence" value="ECO:0007669"/>
    <property type="project" value="InterPro"/>
</dbReference>
<dbReference type="GO" id="GO:0001682">
    <property type="term" value="P:tRNA 5'-leader removal"/>
    <property type="evidence" value="ECO:0007669"/>
    <property type="project" value="UniProtKB-UniRule"/>
</dbReference>
<dbReference type="Gene3D" id="2.30.30.210">
    <property type="entry name" value="Ribonuclease P/MRP, subunit p29"/>
    <property type="match status" value="1"/>
</dbReference>
<dbReference type="HAMAP" id="MF_00754">
    <property type="entry name" value="RNase_P_1"/>
    <property type="match status" value="1"/>
</dbReference>
<dbReference type="InterPro" id="IPR036980">
    <property type="entry name" value="RNase_P/MRP_Rpp29_sf"/>
</dbReference>
<dbReference type="InterPro" id="IPR023538">
    <property type="entry name" value="RNP1"/>
</dbReference>
<dbReference type="InterPro" id="IPR023534">
    <property type="entry name" value="Rof/RNase_P-like"/>
</dbReference>
<dbReference type="InterPro" id="IPR002730">
    <property type="entry name" value="Rpp29/RNP1"/>
</dbReference>
<dbReference type="NCBIfam" id="NF046110">
    <property type="entry name" value="RNaseP1Mthb"/>
    <property type="match status" value="1"/>
</dbReference>
<dbReference type="Pfam" id="PF01868">
    <property type="entry name" value="RNase_P-MRP_p29"/>
    <property type="match status" value="1"/>
</dbReference>
<dbReference type="SMART" id="SM00538">
    <property type="entry name" value="POP4"/>
    <property type="match status" value="1"/>
</dbReference>
<dbReference type="SUPFAM" id="SSF101744">
    <property type="entry name" value="Rof/RNase P subunit-like"/>
    <property type="match status" value="1"/>
</dbReference>
<reference key="1">
    <citation type="journal article" date="1989" name="J. Mol. Biol.">
        <title>Organization and structure of the Methanococcus transcriptional unit homologous to the Escherichia coli 'spectinomycin operon'. Implications for the evolutionary relationship of 70 S and 80 S ribosomes.</title>
        <authorList>
            <person name="Auer J."/>
            <person name="Spicker G."/>
            <person name="Boeck A."/>
        </authorList>
    </citation>
    <scope>NUCLEOTIDE SEQUENCE [GENOMIC DNA]</scope>
</reference>
<comment type="function">
    <text evidence="1">Part of ribonuclease P, a protein complex that generates mature tRNA molecules by cleaving their 5'-ends.</text>
</comment>
<comment type="catalytic activity">
    <reaction evidence="1">
        <text>Endonucleolytic cleavage of RNA, removing 5'-extranucleotides from tRNA precursor.</text>
        <dbReference type="EC" id="3.1.26.5"/>
    </reaction>
</comment>
<comment type="subunit">
    <text evidence="1">Consists of a catalytic RNA component and at least 4-5 protein subunits.</text>
</comment>
<comment type="subcellular location">
    <subcellularLocation>
        <location evidence="1">Cytoplasm</location>
    </subcellularLocation>
</comment>
<comment type="similarity">
    <text evidence="1">Belongs to the eukaryotic/archaeal RNase P protein component 1 family.</text>
</comment>
<organism>
    <name type="scientific">Methanococcus vannielii</name>
    <dbReference type="NCBI Taxonomy" id="2187"/>
    <lineage>
        <taxon>Archaea</taxon>
        <taxon>Methanobacteriati</taxon>
        <taxon>Methanobacteriota</taxon>
        <taxon>Methanomada group</taxon>
        <taxon>Methanococci</taxon>
        <taxon>Methanococcales</taxon>
        <taxon>Methanococcaceae</taxon>
        <taxon>Methanococcus</taxon>
    </lineage>
</organism>
<proteinExistence type="inferred from homology"/>
<name>RNP1_METVA</name>
<accession>P14022</accession>